<name>GLGB_PROMP</name>
<comment type="function">
    <text evidence="1">Catalyzes the formation of the alpha-1,6-glucosidic linkages in glycogen by scission of a 1,4-alpha-linked oligosaccharide from growing alpha-1,4-glucan chains and the subsequent attachment of the oligosaccharide to the alpha-1,6 position.</text>
</comment>
<comment type="catalytic activity">
    <reaction evidence="1">
        <text>Transfers a segment of a (1-&gt;4)-alpha-D-glucan chain to a primary hydroxy group in a similar glucan chain.</text>
        <dbReference type="EC" id="2.4.1.18"/>
    </reaction>
</comment>
<comment type="pathway">
    <text evidence="1">Glycan biosynthesis; glycogen biosynthesis.</text>
</comment>
<comment type="subunit">
    <text evidence="1">Monomer.</text>
</comment>
<comment type="similarity">
    <text evidence="1">Belongs to the glycosyl hydrolase 13 family. GlgB subfamily.</text>
</comment>
<gene>
    <name evidence="1" type="primary">glgB</name>
    <name type="ordered locus">PMM0584</name>
</gene>
<organism>
    <name type="scientific">Prochlorococcus marinus subsp. pastoris (strain CCMP1986 / NIES-2087 / MED4)</name>
    <dbReference type="NCBI Taxonomy" id="59919"/>
    <lineage>
        <taxon>Bacteria</taxon>
        <taxon>Bacillati</taxon>
        <taxon>Cyanobacteriota</taxon>
        <taxon>Cyanophyceae</taxon>
        <taxon>Synechococcales</taxon>
        <taxon>Prochlorococcaceae</taxon>
        <taxon>Prochlorococcus</taxon>
    </lineage>
</organism>
<protein>
    <recommendedName>
        <fullName evidence="1">1,4-alpha-glucan branching enzyme GlgB</fullName>
        <ecNumber evidence="1">2.4.1.18</ecNumber>
    </recommendedName>
    <alternativeName>
        <fullName evidence="1">1,4-alpha-D-glucan:1,4-alpha-D-glucan 6-glucosyl-transferase</fullName>
    </alternativeName>
    <alternativeName>
        <fullName evidence="1">Alpha-(1-&gt;4)-glucan branching enzyme</fullName>
    </alternativeName>
    <alternativeName>
        <fullName evidence="1">Glycogen branching enzyme</fullName>
        <shortName evidence="1">BE</shortName>
    </alternativeName>
</protein>
<proteinExistence type="inferred from homology"/>
<reference key="1">
    <citation type="journal article" date="2003" name="Nature">
        <title>Genome divergence in two Prochlorococcus ecotypes reflects oceanic niche differentiation.</title>
        <authorList>
            <person name="Rocap G."/>
            <person name="Larimer F.W."/>
            <person name="Lamerdin J.E."/>
            <person name="Malfatti S."/>
            <person name="Chain P."/>
            <person name="Ahlgren N.A."/>
            <person name="Arellano A."/>
            <person name="Coleman M."/>
            <person name="Hauser L."/>
            <person name="Hess W.R."/>
            <person name="Johnson Z.I."/>
            <person name="Land M.L."/>
            <person name="Lindell D."/>
            <person name="Post A.F."/>
            <person name="Regala W."/>
            <person name="Shah M."/>
            <person name="Shaw S.L."/>
            <person name="Steglich C."/>
            <person name="Sullivan M.B."/>
            <person name="Ting C.S."/>
            <person name="Tolonen A."/>
            <person name="Webb E.A."/>
            <person name="Zinser E.R."/>
            <person name="Chisholm S.W."/>
        </authorList>
    </citation>
    <scope>NUCLEOTIDE SEQUENCE [LARGE SCALE GENOMIC DNA]</scope>
    <source>
        <strain>CCMP1986 / NIES-2087 / MED4</strain>
    </source>
</reference>
<feature type="chain" id="PRO_0000188729" description="1,4-alpha-glucan branching enzyme GlgB">
    <location>
        <begin position="1"/>
        <end position="754"/>
    </location>
</feature>
<feature type="active site" description="Nucleophile" evidence="1">
    <location>
        <position position="431"/>
    </location>
</feature>
<feature type="active site" description="Proton donor" evidence="1">
    <location>
        <position position="484"/>
    </location>
</feature>
<dbReference type="EC" id="2.4.1.18" evidence="1"/>
<dbReference type="EMBL" id="BX548174">
    <property type="protein sequence ID" value="CAE19043.1"/>
    <property type="molecule type" value="Genomic_DNA"/>
</dbReference>
<dbReference type="RefSeq" id="WP_011132218.1">
    <property type="nucleotide sequence ID" value="NC_005072.1"/>
</dbReference>
<dbReference type="SMR" id="Q7V299"/>
<dbReference type="STRING" id="59919.PMM0584"/>
<dbReference type="CAZy" id="CBM48">
    <property type="family name" value="Carbohydrate-Binding Module Family 48"/>
</dbReference>
<dbReference type="CAZy" id="GH13">
    <property type="family name" value="Glycoside Hydrolase Family 13"/>
</dbReference>
<dbReference type="KEGG" id="pmm:PMM0584"/>
<dbReference type="eggNOG" id="COG0296">
    <property type="taxonomic scope" value="Bacteria"/>
</dbReference>
<dbReference type="HOGENOM" id="CLU_004245_3_2_3"/>
<dbReference type="OrthoDB" id="9800174at2"/>
<dbReference type="UniPathway" id="UPA00164"/>
<dbReference type="Proteomes" id="UP000001026">
    <property type="component" value="Chromosome"/>
</dbReference>
<dbReference type="GO" id="GO:0005829">
    <property type="term" value="C:cytosol"/>
    <property type="evidence" value="ECO:0007669"/>
    <property type="project" value="TreeGrafter"/>
</dbReference>
<dbReference type="GO" id="GO:0003844">
    <property type="term" value="F:1,4-alpha-glucan branching enzyme activity"/>
    <property type="evidence" value="ECO:0007669"/>
    <property type="project" value="UniProtKB-UniRule"/>
</dbReference>
<dbReference type="GO" id="GO:0043169">
    <property type="term" value="F:cation binding"/>
    <property type="evidence" value="ECO:0007669"/>
    <property type="project" value="InterPro"/>
</dbReference>
<dbReference type="GO" id="GO:0004553">
    <property type="term" value="F:hydrolase activity, hydrolyzing O-glycosyl compounds"/>
    <property type="evidence" value="ECO:0007669"/>
    <property type="project" value="InterPro"/>
</dbReference>
<dbReference type="GO" id="GO:0005978">
    <property type="term" value="P:glycogen biosynthetic process"/>
    <property type="evidence" value="ECO:0007669"/>
    <property type="project" value="UniProtKB-UniRule"/>
</dbReference>
<dbReference type="CDD" id="cd11322">
    <property type="entry name" value="AmyAc_Glg_BE"/>
    <property type="match status" value="1"/>
</dbReference>
<dbReference type="CDD" id="cd02855">
    <property type="entry name" value="E_set_GBE_prok_N"/>
    <property type="match status" value="1"/>
</dbReference>
<dbReference type="FunFam" id="2.60.40.10:FF:000169">
    <property type="entry name" value="1,4-alpha-glucan branching enzyme GlgB"/>
    <property type="match status" value="1"/>
</dbReference>
<dbReference type="FunFam" id="2.60.40.1180:FF:000002">
    <property type="entry name" value="1,4-alpha-glucan branching enzyme GlgB"/>
    <property type="match status" value="1"/>
</dbReference>
<dbReference type="FunFam" id="3.20.20.80:FF:000003">
    <property type="entry name" value="1,4-alpha-glucan branching enzyme GlgB"/>
    <property type="match status" value="1"/>
</dbReference>
<dbReference type="Gene3D" id="3.20.20.80">
    <property type="entry name" value="Glycosidases"/>
    <property type="match status" value="1"/>
</dbReference>
<dbReference type="Gene3D" id="2.60.40.1180">
    <property type="entry name" value="Golgi alpha-mannosidase II"/>
    <property type="match status" value="1"/>
</dbReference>
<dbReference type="Gene3D" id="2.60.40.10">
    <property type="entry name" value="Immunoglobulins"/>
    <property type="match status" value="2"/>
</dbReference>
<dbReference type="HAMAP" id="MF_00685">
    <property type="entry name" value="GlgB"/>
    <property type="match status" value="1"/>
</dbReference>
<dbReference type="InterPro" id="IPR006048">
    <property type="entry name" value="A-amylase/branching_C"/>
</dbReference>
<dbReference type="InterPro" id="IPR037439">
    <property type="entry name" value="Branching_enzy"/>
</dbReference>
<dbReference type="InterPro" id="IPR006407">
    <property type="entry name" value="GlgB"/>
</dbReference>
<dbReference type="InterPro" id="IPR054169">
    <property type="entry name" value="GlgB_N"/>
</dbReference>
<dbReference type="InterPro" id="IPR044143">
    <property type="entry name" value="GlgB_N_E_set_prok"/>
</dbReference>
<dbReference type="InterPro" id="IPR006047">
    <property type="entry name" value="Glyco_hydro_13_cat_dom"/>
</dbReference>
<dbReference type="InterPro" id="IPR004193">
    <property type="entry name" value="Glyco_hydro_13_N"/>
</dbReference>
<dbReference type="InterPro" id="IPR013780">
    <property type="entry name" value="Glyco_hydro_b"/>
</dbReference>
<dbReference type="InterPro" id="IPR017853">
    <property type="entry name" value="Glycoside_hydrolase_SF"/>
</dbReference>
<dbReference type="InterPro" id="IPR013783">
    <property type="entry name" value="Ig-like_fold"/>
</dbReference>
<dbReference type="InterPro" id="IPR014756">
    <property type="entry name" value="Ig_E-set"/>
</dbReference>
<dbReference type="NCBIfam" id="TIGR01515">
    <property type="entry name" value="branching_enzym"/>
    <property type="match status" value="1"/>
</dbReference>
<dbReference type="NCBIfam" id="NF003811">
    <property type="entry name" value="PRK05402.1"/>
    <property type="match status" value="1"/>
</dbReference>
<dbReference type="NCBIfam" id="NF008967">
    <property type="entry name" value="PRK12313.1"/>
    <property type="match status" value="1"/>
</dbReference>
<dbReference type="PANTHER" id="PTHR43651">
    <property type="entry name" value="1,4-ALPHA-GLUCAN-BRANCHING ENZYME"/>
    <property type="match status" value="1"/>
</dbReference>
<dbReference type="PANTHER" id="PTHR43651:SF3">
    <property type="entry name" value="1,4-ALPHA-GLUCAN-BRANCHING ENZYME"/>
    <property type="match status" value="1"/>
</dbReference>
<dbReference type="Pfam" id="PF00128">
    <property type="entry name" value="Alpha-amylase"/>
    <property type="match status" value="2"/>
</dbReference>
<dbReference type="Pfam" id="PF02806">
    <property type="entry name" value="Alpha-amylase_C"/>
    <property type="match status" value="1"/>
</dbReference>
<dbReference type="Pfam" id="PF02922">
    <property type="entry name" value="CBM_48"/>
    <property type="match status" value="1"/>
</dbReference>
<dbReference type="Pfam" id="PF22019">
    <property type="entry name" value="GlgB_N"/>
    <property type="match status" value="1"/>
</dbReference>
<dbReference type="PIRSF" id="PIRSF000463">
    <property type="entry name" value="GlgB"/>
    <property type="match status" value="1"/>
</dbReference>
<dbReference type="SMART" id="SM00642">
    <property type="entry name" value="Aamy"/>
    <property type="match status" value="1"/>
</dbReference>
<dbReference type="SUPFAM" id="SSF51445">
    <property type="entry name" value="(Trans)glycosidases"/>
    <property type="match status" value="1"/>
</dbReference>
<dbReference type="SUPFAM" id="SSF81296">
    <property type="entry name" value="E set domains"/>
    <property type="match status" value="2"/>
</dbReference>
<dbReference type="SUPFAM" id="SSF51011">
    <property type="entry name" value="Glycosyl hydrolase domain"/>
    <property type="match status" value="1"/>
</dbReference>
<keyword id="KW-0119">Carbohydrate metabolism</keyword>
<keyword id="KW-0320">Glycogen biosynthesis</keyword>
<keyword id="KW-0321">Glycogen metabolism</keyword>
<keyword id="KW-0328">Glycosyltransferase</keyword>
<keyword id="KW-0808">Transferase</keyword>
<sequence>MKETIQADWIKSEAFNLENCCNDNPLNILGPHFVNGQWITRVWMPEADEVNIIFKDKTYKTTTLNHKWLFEVTLPEDPKNNYQINVSRGGVSHSQQDPWAYRKEWMGELDRHLFAEGNHHHIWEKMGAHIHEETNQQGVMFCIWAPNAKSISIIGDINSWDGRHHPMQKRLGGIWELFMPIMKEGDAYKYEIRTQEGHIYEKADPYGFLHEIRPQNGSIVSKLNNFDWEDSSWITNRDSSSQINKPISVYEMHLGSWMHDSIENKYIEKNGQTRSPVPAADLKPGTRFLTYPELTEKLIPYVKERGFTHIELMPISEHPFDGSWGYQVTGWYAPTSRYGTPNEFKEFINRCHAEGIGVILDWVPGHFPKDKHGLAFFDGCHLYEHGDPRIGEHKEWGTLIFNYSRNEVRNFLVANLIYWFEEFHIDGIRVDAVASMLYRDYLRPEGEWIPNENGGNENLEAVKFLQQANHVLFQHFPGALSIAEESTTWPMVTEPTNVGGLGFNLKWNMGWMHDMLDYFEIDPWFRQFHQNSVTFSITYNYTENFMLALSHDEVVHGKSHLLHKMPGDDWKKFANTRALLTYMWTHPGKKTIFMGMEFGQRQEWNVWDDLQWELLEFEPHKGIRNLVDDLNKLYKNEPSLWKNDFDPYGFQWIDCNDTSNSVISFMRRENESNEWLVIVANFTPNFHGSYKIGVPLEGFYKEIFNSDGSKYGGSNKGNMGGKETLKYNIHNYENALEIVLPPLSVSIFKHQLKQ</sequence>
<evidence type="ECO:0000255" key="1">
    <source>
        <dbReference type="HAMAP-Rule" id="MF_00685"/>
    </source>
</evidence>
<accession>Q7V299</accession>